<protein>
    <recommendedName>
        <fullName>Boletus edulis lectin</fullName>
        <shortName>BEL</shortName>
    </recommendedName>
</protein>
<evidence type="ECO:0000269" key="1">
    <source>
    </source>
</evidence>
<evidence type="ECO:0000305" key="2"/>
<evidence type="ECO:0000305" key="3">
    <source>
    </source>
</evidence>
<evidence type="ECO:0007744" key="4">
    <source>
        <dbReference type="PDB" id="3QDS"/>
    </source>
</evidence>
<evidence type="ECO:0007744" key="5">
    <source>
        <dbReference type="PDB" id="3QDT"/>
    </source>
</evidence>
<evidence type="ECO:0007744" key="6">
    <source>
        <dbReference type="PDB" id="3QDU"/>
    </source>
</evidence>
<evidence type="ECO:0007744" key="7">
    <source>
        <dbReference type="PDB" id="3QDV"/>
    </source>
</evidence>
<evidence type="ECO:0007744" key="8">
    <source>
        <dbReference type="PDB" id="3QDW"/>
    </source>
</evidence>
<evidence type="ECO:0007744" key="9">
    <source>
        <dbReference type="PDB" id="3QDX"/>
    </source>
</evidence>
<evidence type="ECO:0007744" key="10">
    <source>
        <dbReference type="PDB" id="3QDY"/>
    </source>
</evidence>
<evidence type="ECO:0007829" key="11">
    <source>
        <dbReference type="PDB" id="3QDS"/>
    </source>
</evidence>
<keyword id="KW-0002">3D-structure</keyword>
<keyword id="KW-0903">Direct protein sequencing</keyword>
<keyword id="KW-0430">Lectin</keyword>
<accession>F2Z266</accession>
<dbReference type="PDB" id="3QDS">
    <property type="method" value="X-ray"/>
    <property type="resolution" value="1.15 A"/>
    <property type="chains" value="A/B=2-143"/>
</dbReference>
<dbReference type="PDB" id="3QDT">
    <property type="method" value="X-ray"/>
    <property type="resolution" value="1.30 A"/>
    <property type="chains" value="A/B=2-143"/>
</dbReference>
<dbReference type="PDB" id="3QDU">
    <property type="method" value="X-ray"/>
    <property type="resolution" value="2.00 A"/>
    <property type="chains" value="A/B/C/D=2-143"/>
</dbReference>
<dbReference type="PDB" id="3QDV">
    <property type="method" value="X-ray"/>
    <property type="resolution" value="1.30 A"/>
    <property type="chains" value="A/B=2-143"/>
</dbReference>
<dbReference type="PDB" id="3QDW">
    <property type="method" value="X-ray"/>
    <property type="resolution" value="1.90 A"/>
    <property type="chains" value="A/B=2-143"/>
</dbReference>
<dbReference type="PDB" id="3QDX">
    <property type="method" value="X-ray"/>
    <property type="resolution" value="1.70 A"/>
    <property type="chains" value="A/B=2-143"/>
</dbReference>
<dbReference type="PDB" id="3QDY">
    <property type="method" value="X-ray"/>
    <property type="resolution" value="2.00 A"/>
    <property type="chains" value="A/B=2-143"/>
</dbReference>
<dbReference type="PDBsum" id="3QDS"/>
<dbReference type="PDBsum" id="3QDT"/>
<dbReference type="PDBsum" id="3QDU"/>
<dbReference type="PDBsum" id="3QDV"/>
<dbReference type="PDBsum" id="3QDW"/>
<dbReference type="PDBsum" id="3QDX"/>
<dbReference type="PDBsum" id="3QDY"/>
<dbReference type="SMR" id="F2Z266"/>
<dbReference type="Allergome" id="11373">
    <property type="allergen name" value="Bol ed Lectin"/>
</dbReference>
<dbReference type="UniLectin" id="F2Z266"/>
<dbReference type="EvolutionaryTrace" id="F2Z266"/>
<dbReference type="GO" id="GO:0030246">
    <property type="term" value="F:carbohydrate binding"/>
    <property type="evidence" value="ECO:0007669"/>
    <property type="project" value="UniProtKB-KW"/>
</dbReference>
<dbReference type="Gene3D" id="2.60.270.20">
    <property type="entry name" value="Cytolysin/lectin"/>
    <property type="match status" value="1"/>
</dbReference>
<dbReference type="InterPro" id="IPR015926">
    <property type="entry name" value="Cytolysin/lectin"/>
</dbReference>
<dbReference type="InterPro" id="IPR009960">
    <property type="entry name" value="Fruit_body_lectin_fun"/>
</dbReference>
<dbReference type="Pfam" id="PF07367">
    <property type="entry name" value="FB_lectin"/>
    <property type="match status" value="1"/>
</dbReference>
<dbReference type="SUPFAM" id="SSF63724">
    <property type="entry name" value="Cytolysin/lectin"/>
    <property type="match status" value="1"/>
</dbReference>
<name>BEL_BOLED</name>
<proteinExistence type="evidence at protein level"/>
<feature type="initiator methionine" description="Removed" evidence="3">
    <location>
        <position position="1"/>
    </location>
</feature>
<feature type="chain" id="PRO_0000413861" description="Boletus edulis lectin">
    <location>
        <begin position="2"/>
        <end position="143"/>
    </location>
</feature>
<feature type="binding site" evidence="5">
    <location>
        <position position="30"/>
    </location>
    <ligand>
        <name>beta-D-Gal-(1-&gt;3)-alpha-D-GalNAc</name>
        <dbReference type="ChEBI" id="CHEBI:61820"/>
    </ligand>
</feature>
<feature type="binding site" evidence="5">
    <location>
        <begin position="49"/>
        <end position="50"/>
    </location>
    <ligand>
        <name>beta-D-Gal-(1-&gt;3)-alpha-D-GalNAc</name>
        <dbReference type="ChEBI" id="CHEBI:61820"/>
    </ligand>
</feature>
<feature type="binding site" evidence="7">
    <location>
        <begin position="49"/>
        <end position="50"/>
    </location>
    <ligand>
        <name>N-acetyl-alpha-D-galactosamine</name>
        <dbReference type="ChEBI" id="CHEBI:40356"/>
    </ligand>
</feature>
<feature type="binding site" evidence="5">
    <location>
        <begin position="72"/>
        <end position="73"/>
    </location>
    <ligand>
        <name>beta-D-Gal-(1-&gt;3)-alpha-D-GalNAc</name>
        <dbReference type="ChEBI" id="CHEBI:61820"/>
    </ligand>
</feature>
<feature type="binding site" evidence="7">
    <location>
        <begin position="72"/>
        <end position="73"/>
    </location>
    <ligand>
        <name>N-acetyl-alpha-D-galactosamine</name>
        <dbReference type="ChEBI" id="CHEBI:40356"/>
    </ligand>
</feature>
<feature type="binding site" evidence="6">
    <location>
        <begin position="79"/>
        <end position="82"/>
    </location>
    <ligand>
        <name>N,N'-diacetylchitobiose</name>
        <dbReference type="ChEBI" id="CHEBI:28681"/>
    </ligand>
</feature>
<feature type="binding site" evidence="7">
    <location>
        <begin position="79"/>
        <end position="82"/>
    </location>
    <ligand>
        <name>N-acetyl-alpha-D-glucosamine</name>
        <dbReference type="ChEBI" id="CHEBI:44278"/>
    </ligand>
</feature>
<feature type="binding site" evidence="6">
    <location>
        <position position="103"/>
    </location>
    <ligand>
        <name>N,N'-diacetylchitobiose</name>
        <dbReference type="ChEBI" id="CHEBI:28681"/>
    </ligand>
</feature>
<feature type="binding site" evidence="7">
    <location>
        <position position="103"/>
    </location>
    <ligand>
        <name>N-acetyl-alpha-D-glucosamine</name>
        <dbReference type="ChEBI" id="CHEBI:44278"/>
    </ligand>
</feature>
<feature type="binding site" evidence="6">
    <location>
        <position position="114"/>
    </location>
    <ligand>
        <name>N,N'-diacetylchitobiose</name>
        <dbReference type="ChEBI" id="CHEBI:28681"/>
    </ligand>
</feature>
<feature type="binding site" evidence="7">
    <location>
        <position position="114"/>
    </location>
    <ligand>
        <name>N-acetyl-alpha-D-glucosamine</name>
        <dbReference type="ChEBI" id="CHEBI:44278"/>
    </ligand>
</feature>
<feature type="strand" evidence="11">
    <location>
        <begin position="3"/>
        <end position="11"/>
    </location>
</feature>
<feature type="helix" evidence="11">
    <location>
        <begin position="14"/>
        <end position="16"/>
    </location>
</feature>
<feature type="strand" evidence="11">
    <location>
        <begin position="19"/>
        <end position="26"/>
    </location>
</feature>
<feature type="helix" evidence="11">
    <location>
        <begin position="29"/>
        <end position="31"/>
    </location>
</feature>
<feature type="strand" evidence="11">
    <location>
        <begin position="33"/>
        <end position="38"/>
    </location>
</feature>
<feature type="strand" evidence="11">
    <location>
        <begin position="41"/>
        <end position="50"/>
    </location>
</feature>
<feature type="strand" evidence="11">
    <location>
        <begin position="52"/>
        <end position="59"/>
    </location>
</feature>
<feature type="strand" evidence="11">
    <location>
        <begin position="64"/>
        <end position="72"/>
    </location>
</feature>
<feature type="strand" evidence="11">
    <location>
        <begin position="75"/>
        <end position="81"/>
    </location>
</feature>
<feature type="helix" evidence="11">
    <location>
        <begin position="90"/>
        <end position="93"/>
    </location>
</feature>
<feature type="helix" evidence="11">
    <location>
        <begin position="94"/>
        <end position="97"/>
    </location>
</feature>
<feature type="helix" evidence="11">
    <location>
        <begin position="104"/>
        <end position="108"/>
    </location>
</feature>
<feature type="strand" evidence="11">
    <location>
        <begin position="112"/>
        <end position="117"/>
    </location>
</feature>
<feature type="strand" evidence="11">
    <location>
        <begin position="123"/>
        <end position="130"/>
    </location>
</feature>
<feature type="strand" evidence="11">
    <location>
        <begin position="132"/>
        <end position="142"/>
    </location>
</feature>
<organism>
    <name type="scientific">Boletus edulis</name>
    <name type="common">King bolete</name>
    <dbReference type="NCBI Taxonomy" id="36056"/>
    <lineage>
        <taxon>Eukaryota</taxon>
        <taxon>Fungi</taxon>
        <taxon>Dikarya</taxon>
        <taxon>Basidiomycota</taxon>
        <taxon>Agaricomycotina</taxon>
        <taxon>Agaricomycetes</taxon>
        <taxon>Agaricomycetidae</taxon>
        <taxon>Boletales</taxon>
        <taxon>Boletineae</taxon>
        <taxon>Boletaceae</taxon>
        <taxon>Boletoideae</taxon>
        <taxon>Boletus</taxon>
    </lineage>
</organism>
<reference evidence="4 5 6 7 8 9 10" key="1">
    <citation type="journal article" date="2011" name="Glycobiology">
        <title>Structure of a lectin with antitumoral properties in king bolete (Boletus edulis) mushrooms.</title>
        <authorList>
            <person name="Bovi M."/>
            <person name="Carrizo M.E."/>
            <person name="Capaldi S."/>
            <person name="Perduca M."/>
            <person name="Chiarelli L.R."/>
            <person name="Galliano M."/>
            <person name="Monaco H.L."/>
        </authorList>
    </citation>
    <scope>PROTEIN SEQUENCE OF 2-143</scope>
    <scope>X-RAY CRYSTALLOGRAPHY (1.15 ANGSTROMS) IN COMPLEXES WITH T-ANTIGEN DISACCHARIDE; DIACETYLCHITOBIOSE AND OTHER SUGAR MOIETIES</scope>
    <scope>FUNCTION</scope>
    <scope>SUBUNIT</scope>
    <scope>IDENTIFICATION BY MASS SPECTROMETRY</scope>
</reference>
<comment type="function">
    <text evidence="1">Lectin that recognizes O-linked galactose-beta-1,3-N-acetylgalactosamine, a disaccharide (Thomsen-Friedenreich antigen or T-disaccharide), present on cell surface glycoproteins. Can also bind chitin, N,N'-diacetylchitobiose, N-acetylgalactosamine and N-acetylglucosamine. Inhibits proliferation of colon, breast and liver cancer cell lines (in vitro).</text>
</comment>
<comment type="subunit">
    <text evidence="1">Homotetramer.</text>
</comment>
<comment type="biotechnology">
    <text>Lectins can be used to recognize and purifiy specific glycoproteins, and for the purification of cells with specific surface glycoproteins. Has potential as anti-proliferative agent.</text>
</comment>
<comment type="similarity">
    <text evidence="2">Belongs to the fungal fruit body lectin family.</text>
</comment>
<sequence length="143" mass="15939">MTYSITLRVFQRNPGRGFFSIVEKTVFHYANGGTWSEAKGTHTLTMGGSGTSGVLRFMSDKGELITVAVGVHNYKRWCDVVTGLKPEETALVINPQYYNNGPRAYTREKQLAEYNVTSVVGTRFEVKYTVVEGNNLEANVIFS</sequence>